<dbReference type="EMBL" id="AY348866">
    <property type="protein sequence ID" value="AAQ55226.1"/>
    <property type="molecule type" value="mRNA"/>
</dbReference>
<dbReference type="EMBL" id="AK032023">
    <property type="protein sequence ID" value="BAC27654.1"/>
    <property type="molecule type" value="mRNA"/>
</dbReference>
<dbReference type="EMBL" id="AK049830">
    <property type="protein sequence ID" value="BAC33942.1"/>
    <property type="molecule type" value="mRNA"/>
</dbReference>
<dbReference type="EMBL" id="BC059811">
    <property type="protein sequence ID" value="AAH59811.1"/>
    <property type="molecule type" value="mRNA"/>
</dbReference>
<dbReference type="CCDS" id="CCDS19244.1"/>
<dbReference type="RefSeq" id="NP_766582.1">
    <property type="nucleotide sequence ID" value="NM_172994.4"/>
</dbReference>
<dbReference type="SMR" id="Q8BG02"/>
<dbReference type="BioGRID" id="234690">
    <property type="interactions" value="1"/>
</dbReference>
<dbReference type="FunCoup" id="Q8BG02">
    <property type="interactions" value="958"/>
</dbReference>
<dbReference type="STRING" id="10090.ENSMUSP00000031003"/>
<dbReference type="GlyGen" id="Q8BG02">
    <property type="glycosylation" value="1 site, 1 N-linked glycan (1 site)"/>
</dbReference>
<dbReference type="iPTMnet" id="Q8BG02"/>
<dbReference type="PhosphoSitePlus" id="Q8BG02"/>
<dbReference type="jPOST" id="Q8BG02"/>
<dbReference type="PaxDb" id="10090-ENSMUSP00000031003"/>
<dbReference type="PeptideAtlas" id="Q8BG02"/>
<dbReference type="ProteomicsDB" id="285533"/>
<dbReference type="Antibodypedia" id="22656">
    <property type="antibodies" value="104 antibodies from 25 providers"/>
</dbReference>
<dbReference type="DNASU" id="269643"/>
<dbReference type="Ensembl" id="ENSMUST00000031003.11">
    <property type="protein sequence ID" value="ENSMUSP00000031003.8"/>
    <property type="gene ID" value="ENSMUSG00000029120.11"/>
</dbReference>
<dbReference type="GeneID" id="269643"/>
<dbReference type="KEGG" id="mmu:269643"/>
<dbReference type="UCSC" id="uc008xfe.1">
    <property type="organism name" value="mouse"/>
</dbReference>
<dbReference type="AGR" id="MGI:2442660"/>
<dbReference type="CTD" id="5522"/>
<dbReference type="MGI" id="MGI:2442660">
    <property type="gene designation" value="Ppp2r2c"/>
</dbReference>
<dbReference type="VEuPathDB" id="HostDB:ENSMUSG00000029120"/>
<dbReference type="eggNOG" id="KOG1354">
    <property type="taxonomic scope" value="Eukaryota"/>
</dbReference>
<dbReference type="GeneTree" id="ENSGT00950000182864"/>
<dbReference type="HOGENOM" id="CLU_021713_3_3_1"/>
<dbReference type="InParanoid" id="Q8BG02"/>
<dbReference type="OMA" id="LVPMELI"/>
<dbReference type="OrthoDB" id="6274823at2759"/>
<dbReference type="PhylomeDB" id="Q8BG02"/>
<dbReference type="TreeFam" id="TF105553"/>
<dbReference type="BioGRID-ORCS" id="269643">
    <property type="hits" value="2 hits in 79 CRISPR screens"/>
</dbReference>
<dbReference type="ChiTaRS" id="Ppp2r2c">
    <property type="organism name" value="mouse"/>
</dbReference>
<dbReference type="PRO" id="PR:Q8BG02"/>
<dbReference type="Proteomes" id="UP000000589">
    <property type="component" value="Chromosome 5"/>
</dbReference>
<dbReference type="RNAct" id="Q8BG02">
    <property type="molecule type" value="protein"/>
</dbReference>
<dbReference type="Bgee" id="ENSMUSG00000029120">
    <property type="expression patterns" value="Expressed in visual cortex and 130 other cell types or tissues"/>
</dbReference>
<dbReference type="ExpressionAtlas" id="Q8BG02">
    <property type="expression patterns" value="baseline and differential"/>
</dbReference>
<dbReference type="GO" id="GO:0000159">
    <property type="term" value="C:protein phosphatase type 2A complex"/>
    <property type="evidence" value="ECO:0007669"/>
    <property type="project" value="InterPro"/>
</dbReference>
<dbReference type="GO" id="GO:0019888">
    <property type="term" value="F:protein phosphatase regulator activity"/>
    <property type="evidence" value="ECO:0007669"/>
    <property type="project" value="InterPro"/>
</dbReference>
<dbReference type="FunFam" id="2.130.10.10:FF:000002">
    <property type="entry name" value="Serine/threonine-protein phosphatase 2A 55 kDa regulatory subunit B"/>
    <property type="match status" value="1"/>
</dbReference>
<dbReference type="Gene3D" id="2.130.10.10">
    <property type="entry name" value="YVTN repeat-like/Quinoprotein amine dehydrogenase"/>
    <property type="match status" value="1"/>
</dbReference>
<dbReference type="InterPro" id="IPR000009">
    <property type="entry name" value="PP2A_PR55"/>
</dbReference>
<dbReference type="InterPro" id="IPR018067">
    <property type="entry name" value="PP2A_PR55_CS"/>
</dbReference>
<dbReference type="InterPro" id="IPR015943">
    <property type="entry name" value="WD40/YVTN_repeat-like_dom_sf"/>
</dbReference>
<dbReference type="InterPro" id="IPR036322">
    <property type="entry name" value="WD40_repeat_dom_sf"/>
</dbReference>
<dbReference type="InterPro" id="IPR001680">
    <property type="entry name" value="WD40_rpt"/>
</dbReference>
<dbReference type="PANTHER" id="PTHR11871">
    <property type="entry name" value="PROTEIN PHOSPHATASE PP2A REGULATORY SUBUNIT B"/>
    <property type="match status" value="1"/>
</dbReference>
<dbReference type="PIRSF" id="PIRSF037309">
    <property type="entry name" value="PP2A_PR55"/>
    <property type="match status" value="1"/>
</dbReference>
<dbReference type="PRINTS" id="PR00600">
    <property type="entry name" value="PP2APR55"/>
</dbReference>
<dbReference type="SMART" id="SM00320">
    <property type="entry name" value="WD40"/>
    <property type="match status" value="6"/>
</dbReference>
<dbReference type="SUPFAM" id="SSF50978">
    <property type="entry name" value="WD40 repeat-like"/>
    <property type="match status" value="1"/>
</dbReference>
<dbReference type="PROSITE" id="PS01024">
    <property type="entry name" value="PR55_1"/>
    <property type="match status" value="1"/>
</dbReference>
<dbReference type="PROSITE" id="PS01025">
    <property type="entry name" value="PR55_2"/>
    <property type="match status" value="1"/>
</dbReference>
<comment type="function">
    <text evidence="1">The B regulatory subunit might modulate substrate selectivity and catalytic activity, and might also direct the localization of the catalytic enzyme to a particular subcellular compartment.</text>
</comment>
<comment type="subunit">
    <text evidence="1 2">PP2A consists of a common heterodimeric core enzyme, composed of a 36 kDa catalytic subunit (subunit C) and a 65 kDa constant regulatory subunit (PR65 or subunit A), that associates with a variety of regulatory subunits. Proteins that associate with the core dimer include three families of regulatory subunits B (the R2/B/PR55/B55, R3/B''/PR72/PR130/PR59 and R5/B'/B56 families), the 48 kDa variable regulatory subunit, viral proteins, and cell signaling molecules (By similarity). Interacts with IER5 (By similarity).</text>
</comment>
<comment type="similarity">
    <text evidence="3">Belongs to the phosphatase 2A regulatory subunit B family.</text>
</comment>
<accession>Q8BG02</accession>
<keyword id="KW-1185">Reference proteome</keyword>
<keyword id="KW-0677">Repeat</keyword>
<keyword id="KW-0853">WD repeat</keyword>
<organism>
    <name type="scientific">Mus musculus</name>
    <name type="common">Mouse</name>
    <dbReference type="NCBI Taxonomy" id="10090"/>
    <lineage>
        <taxon>Eukaryota</taxon>
        <taxon>Metazoa</taxon>
        <taxon>Chordata</taxon>
        <taxon>Craniata</taxon>
        <taxon>Vertebrata</taxon>
        <taxon>Euteleostomi</taxon>
        <taxon>Mammalia</taxon>
        <taxon>Eutheria</taxon>
        <taxon>Euarchontoglires</taxon>
        <taxon>Glires</taxon>
        <taxon>Rodentia</taxon>
        <taxon>Myomorpha</taxon>
        <taxon>Muroidea</taxon>
        <taxon>Muridae</taxon>
        <taxon>Murinae</taxon>
        <taxon>Mus</taxon>
        <taxon>Mus</taxon>
    </lineage>
</organism>
<gene>
    <name type="primary">Ppp2r2c</name>
</gene>
<name>2ABG_MOUSE</name>
<evidence type="ECO:0000250" key="1"/>
<evidence type="ECO:0000250" key="2">
    <source>
        <dbReference type="UniProtKB" id="Q9Y2T4"/>
    </source>
</evidence>
<evidence type="ECO:0000305" key="3"/>
<proteinExistence type="evidence at protein level"/>
<feature type="chain" id="PRO_0000071430" description="Serine/threonine-protein phosphatase 2A 55 kDa regulatory subunit B gamma isoform">
    <location>
        <begin position="1"/>
        <end position="447"/>
    </location>
</feature>
<feature type="repeat" description="WD 1">
    <location>
        <begin position="22"/>
        <end position="61"/>
    </location>
</feature>
<feature type="repeat" description="WD 2">
    <location>
        <begin position="87"/>
        <end position="128"/>
    </location>
</feature>
<feature type="repeat" description="WD 3">
    <location>
        <begin position="171"/>
        <end position="209"/>
    </location>
</feature>
<feature type="repeat" description="WD 4">
    <location>
        <begin position="220"/>
        <end position="260"/>
    </location>
</feature>
<feature type="repeat" description="WD 5">
    <location>
        <begin position="279"/>
        <end position="317"/>
    </location>
</feature>
<feature type="repeat" description="WD 6">
    <location>
        <begin position="334"/>
        <end position="375"/>
    </location>
</feature>
<feature type="repeat" description="WD 7">
    <location>
        <begin position="410"/>
        <end position="446"/>
    </location>
</feature>
<sequence length="447" mass="51462">MGEDTDTRKINHSFLRDHSYVTEADVISTVEFNHTGELLATGDKGGRVVIFQREPESKNAPHSQGEYDVYSTFQSHEPEFDYLKSLEIEEKINKIKWLPQQNAAHSLLSTNDKTIKLWKITERDKRPEGYNLKDEEGKLKDLSTVTSLQVPVLKPMDLMVEVSPRRTFANGHTYHINSISVNSDCETYMSADDLRINLWHLAITDRSFNIVDIKPANMEDLTEVITASEFHPHHCNLFVYSSSKGSLRLCDMRAAALCDKHSKLFEEPEDPSNRSFFSEIISSVSDVKFSHSGRYMLTRDYLTVKVWDLNMEARPIETYQVHDYLRSKLCSLYESDCIFDKFECAWNGSDSVIMTGAYNNFFRMFDRNTKRDVTLEASRESSKPRAVLKPRRVCVGGKRRRDDISVDSLDFTKKILHTAWHPAENIIAIAATNNLYIFQDKVNSDMH</sequence>
<protein>
    <recommendedName>
        <fullName>Serine/threonine-protein phosphatase 2A 55 kDa regulatory subunit B gamma isoform</fullName>
    </recommendedName>
    <alternativeName>
        <fullName>PP2A subunit B isoform B55-gamma</fullName>
    </alternativeName>
    <alternativeName>
        <fullName>PP2A subunit B isoform PR55-gamma</fullName>
    </alternativeName>
    <alternativeName>
        <fullName>PP2A subunit B isoform R2-gamma</fullName>
    </alternativeName>
    <alternativeName>
        <fullName>PP2A subunit B isoform gamma</fullName>
    </alternativeName>
</protein>
<reference key="1">
    <citation type="submission" date="2003-07" db="EMBL/GenBank/DDBJ databases">
        <title>Cloning of mouse protein phosphatase 2 (formerly 2A), regulatory subunit B.</title>
        <authorList>
            <person name="Zhou G."/>
            <person name="Huang X."/>
            <person name="Yu L."/>
        </authorList>
    </citation>
    <scope>NUCLEOTIDE SEQUENCE [MRNA]</scope>
    <source>
        <strain>C57BL/6J</strain>
    </source>
</reference>
<reference key="2">
    <citation type="journal article" date="2005" name="Science">
        <title>The transcriptional landscape of the mammalian genome.</title>
        <authorList>
            <person name="Carninci P."/>
            <person name="Kasukawa T."/>
            <person name="Katayama S."/>
            <person name="Gough J."/>
            <person name="Frith M.C."/>
            <person name="Maeda N."/>
            <person name="Oyama R."/>
            <person name="Ravasi T."/>
            <person name="Lenhard B."/>
            <person name="Wells C."/>
            <person name="Kodzius R."/>
            <person name="Shimokawa K."/>
            <person name="Bajic V.B."/>
            <person name="Brenner S.E."/>
            <person name="Batalov S."/>
            <person name="Forrest A.R."/>
            <person name="Zavolan M."/>
            <person name="Davis M.J."/>
            <person name="Wilming L.G."/>
            <person name="Aidinis V."/>
            <person name="Allen J.E."/>
            <person name="Ambesi-Impiombato A."/>
            <person name="Apweiler R."/>
            <person name="Aturaliya R.N."/>
            <person name="Bailey T.L."/>
            <person name="Bansal M."/>
            <person name="Baxter L."/>
            <person name="Beisel K.W."/>
            <person name="Bersano T."/>
            <person name="Bono H."/>
            <person name="Chalk A.M."/>
            <person name="Chiu K.P."/>
            <person name="Choudhary V."/>
            <person name="Christoffels A."/>
            <person name="Clutterbuck D.R."/>
            <person name="Crowe M.L."/>
            <person name="Dalla E."/>
            <person name="Dalrymple B.P."/>
            <person name="de Bono B."/>
            <person name="Della Gatta G."/>
            <person name="di Bernardo D."/>
            <person name="Down T."/>
            <person name="Engstrom P."/>
            <person name="Fagiolini M."/>
            <person name="Faulkner G."/>
            <person name="Fletcher C.F."/>
            <person name="Fukushima T."/>
            <person name="Furuno M."/>
            <person name="Futaki S."/>
            <person name="Gariboldi M."/>
            <person name="Georgii-Hemming P."/>
            <person name="Gingeras T.R."/>
            <person name="Gojobori T."/>
            <person name="Green R.E."/>
            <person name="Gustincich S."/>
            <person name="Harbers M."/>
            <person name="Hayashi Y."/>
            <person name="Hensch T.K."/>
            <person name="Hirokawa N."/>
            <person name="Hill D."/>
            <person name="Huminiecki L."/>
            <person name="Iacono M."/>
            <person name="Ikeo K."/>
            <person name="Iwama A."/>
            <person name="Ishikawa T."/>
            <person name="Jakt M."/>
            <person name="Kanapin A."/>
            <person name="Katoh M."/>
            <person name="Kawasawa Y."/>
            <person name="Kelso J."/>
            <person name="Kitamura H."/>
            <person name="Kitano H."/>
            <person name="Kollias G."/>
            <person name="Krishnan S.P."/>
            <person name="Kruger A."/>
            <person name="Kummerfeld S.K."/>
            <person name="Kurochkin I.V."/>
            <person name="Lareau L.F."/>
            <person name="Lazarevic D."/>
            <person name="Lipovich L."/>
            <person name="Liu J."/>
            <person name="Liuni S."/>
            <person name="McWilliam S."/>
            <person name="Madan Babu M."/>
            <person name="Madera M."/>
            <person name="Marchionni L."/>
            <person name="Matsuda H."/>
            <person name="Matsuzawa S."/>
            <person name="Miki H."/>
            <person name="Mignone F."/>
            <person name="Miyake S."/>
            <person name="Morris K."/>
            <person name="Mottagui-Tabar S."/>
            <person name="Mulder N."/>
            <person name="Nakano N."/>
            <person name="Nakauchi H."/>
            <person name="Ng P."/>
            <person name="Nilsson R."/>
            <person name="Nishiguchi S."/>
            <person name="Nishikawa S."/>
            <person name="Nori F."/>
            <person name="Ohara O."/>
            <person name="Okazaki Y."/>
            <person name="Orlando V."/>
            <person name="Pang K.C."/>
            <person name="Pavan W.J."/>
            <person name="Pavesi G."/>
            <person name="Pesole G."/>
            <person name="Petrovsky N."/>
            <person name="Piazza S."/>
            <person name="Reed J."/>
            <person name="Reid J.F."/>
            <person name="Ring B.Z."/>
            <person name="Ringwald M."/>
            <person name="Rost B."/>
            <person name="Ruan Y."/>
            <person name="Salzberg S.L."/>
            <person name="Sandelin A."/>
            <person name="Schneider C."/>
            <person name="Schoenbach C."/>
            <person name="Sekiguchi K."/>
            <person name="Semple C.A."/>
            <person name="Seno S."/>
            <person name="Sessa L."/>
            <person name="Sheng Y."/>
            <person name="Shibata Y."/>
            <person name="Shimada H."/>
            <person name="Shimada K."/>
            <person name="Silva D."/>
            <person name="Sinclair B."/>
            <person name="Sperling S."/>
            <person name="Stupka E."/>
            <person name="Sugiura K."/>
            <person name="Sultana R."/>
            <person name="Takenaka Y."/>
            <person name="Taki K."/>
            <person name="Tammoja K."/>
            <person name="Tan S.L."/>
            <person name="Tang S."/>
            <person name="Taylor M.S."/>
            <person name="Tegner J."/>
            <person name="Teichmann S.A."/>
            <person name="Ueda H.R."/>
            <person name="van Nimwegen E."/>
            <person name="Verardo R."/>
            <person name="Wei C.L."/>
            <person name="Yagi K."/>
            <person name="Yamanishi H."/>
            <person name="Zabarovsky E."/>
            <person name="Zhu S."/>
            <person name="Zimmer A."/>
            <person name="Hide W."/>
            <person name="Bult C."/>
            <person name="Grimmond S.M."/>
            <person name="Teasdale R.D."/>
            <person name="Liu E.T."/>
            <person name="Brusic V."/>
            <person name="Quackenbush J."/>
            <person name="Wahlestedt C."/>
            <person name="Mattick J.S."/>
            <person name="Hume D.A."/>
            <person name="Kai C."/>
            <person name="Sasaki D."/>
            <person name="Tomaru Y."/>
            <person name="Fukuda S."/>
            <person name="Kanamori-Katayama M."/>
            <person name="Suzuki M."/>
            <person name="Aoki J."/>
            <person name="Arakawa T."/>
            <person name="Iida J."/>
            <person name="Imamura K."/>
            <person name="Itoh M."/>
            <person name="Kato T."/>
            <person name="Kawaji H."/>
            <person name="Kawagashira N."/>
            <person name="Kawashima T."/>
            <person name="Kojima M."/>
            <person name="Kondo S."/>
            <person name="Konno H."/>
            <person name="Nakano K."/>
            <person name="Ninomiya N."/>
            <person name="Nishio T."/>
            <person name="Okada M."/>
            <person name="Plessy C."/>
            <person name="Shibata K."/>
            <person name="Shiraki T."/>
            <person name="Suzuki S."/>
            <person name="Tagami M."/>
            <person name="Waki K."/>
            <person name="Watahiki A."/>
            <person name="Okamura-Oho Y."/>
            <person name="Suzuki H."/>
            <person name="Kawai J."/>
            <person name="Hayashizaki Y."/>
        </authorList>
    </citation>
    <scope>NUCLEOTIDE SEQUENCE [LARGE SCALE MRNA]</scope>
    <source>
        <strain>C57BL/6J</strain>
        <tissue>Hippocampus</tissue>
        <tissue>Medulla oblongata</tissue>
    </source>
</reference>
<reference key="3">
    <citation type="journal article" date="2004" name="Genome Res.">
        <title>The status, quality, and expansion of the NIH full-length cDNA project: the Mammalian Gene Collection (MGC).</title>
        <authorList>
            <consortium name="The MGC Project Team"/>
        </authorList>
    </citation>
    <scope>NUCLEOTIDE SEQUENCE [LARGE SCALE MRNA]</scope>
    <source>
        <strain>C57BL/6J</strain>
        <tissue>Brain</tissue>
    </source>
</reference>
<reference key="4">
    <citation type="journal article" date="2010" name="Cell">
        <title>A tissue-specific atlas of mouse protein phosphorylation and expression.</title>
        <authorList>
            <person name="Huttlin E.L."/>
            <person name="Jedrychowski M.P."/>
            <person name="Elias J.E."/>
            <person name="Goswami T."/>
            <person name="Rad R."/>
            <person name="Beausoleil S.A."/>
            <person name="Villen J."/>
            <person name="Haas W."/>
            <person name="Sowa M.E."/>
            <person name="Gygi S.P."/>
        </authorList>
    </citation>
    <scope>IDENTIFICATION BY MASS SPECTROMETRY [LARGE SCALE ANALYSIS]</scope>
    <source>
        <tissue>Brain</tissue>
    </source>
</reference>